<keyword id="KW-0028">Amino-acid biosynthesis</keyword>
<keyword id="KW-0100">Branched-chain amino acid biosynthesis</keyword>
<keyword id="KW-0460">Magnesium</keyword>
<keyword id="KW-0479">Metal-binding</keyword>
<keyword id="KW-0521">NADP</keyword>
<keyword id="KW-0560">Oxidoreductase</keyword>
<name>ILVC_PETMO</name>
<evidence type="ECO:0000255" key="1">
    <source>
        <dbReference type="HAMAP-Rule" id="MF_00435"/>
    </source>
</evidence>
<evidence type="ECO:0000255" key="2">
    <source>
        <dbReference type="PROSITE-ProRule" id="PRU01197"/>
    </source>
</evidence>
<evidence type="ECO:0000255" key="3">
    <source>
        <dbReference type="PROSITE-ProRule" id="PRU01198"/>
    </source>
</evidence>
<dbReference type="EC" id="1.1.1.86" evidence="1"/>
<dbReference type="EMBL" id="CP000879">
    <property type="protein sequence ID" value="ABX32286.1"/>
    <property type="molecule type" value="Genomic_DNA"/>
</dbReference>
<dbReference type="RefSeq" id="WP_012209383.1">
    <property type="nucleotide sequence ID" value="NC_010003.1"/>
</dbReference>
<dbReference type="SMR" id="A9BGP6"/>
<dbReference type="STRING" id="403833.Pmob_1590"/>
<dbReference type="KEGG" id="pmo:Pmob_1590"/>
<dbReference type="eggNOG" id="COG0059">
    <property type="taxonomic scope" value="Bacteria"/>
</dbReference>
<dbReference type="HOGENOM" id="CLU_033821_0_1_0"/>
<dbReference type="UniPathway" id="UPA00047">
    <property type="reaction ID" value="UER00056"/>
</dbReference>
<dbReference type="UniPathway" id="UPA00049">
    <property type="reaction ID" value="UER00060"/>
</dbReference>
<dbReference type="Proteomes" id="UP000000789">
    <property type="component" value="Chromosome"/>
</dbReference>
<dbReference type="GO" id="GO:0005829">
    <property type="term" value="C:cytosol"/>
    <property type="evidence" value="ECO:0007669"/>
    <property type="project" value="TreeGrafter"/>
</dbReference>
<dbReference type="GO" id="GO:0004455">
    <property type="term" value="F:ketol-acid reductoisomerase activity"/>
    <property type="evidence" value="ECO:0007669"/>
    <property type="project" value="UniProtKB-UniRule"/>
</dbReference>
<dbReference type="GO" id="GO:0000287">
    <property type="term" value="F:magnesium ion binding"/>
    <property type="evidence" value="ECO:0007669"/>
    <property type="project" value="UniProtKB-UniRule"/>
</dbReference>
<dbReference type="GO" id="GO:0050661">
    <property type="term" value="F:NADP binding"/>
    <property type="evidence" value="ECO:0007669"/>
    <property type="project" value="InterPro"/>
</dbReference>
<dbReference type="GO" id="GO:0009097">
    <property type="term" value="P:isoleucine biosynthetic process"/>
    <property type="evidence" value="ECO:0007669"/>
    <property type="project" value="UniProtKB-UniRule"/>
</dbReference>
<dbReference type="GO" id="GO:0009099">
    <property type="term" value="P:L-valine biosynthetic process"/>
    <property type="evidence" value="ECO:0007669"/>
    <property type="project" value="UniProtKB-UniRule"/>
</dbReference>
<dbReference type="FunFam" id="3.40.50.720:FF:000023">
    <property type="entry name" value="Ketol-acid reductoisomerase (NADP(+))"/>
    <property type="match status" value="1"/>
</dbReference>
<dbReference type="Gene3D" id="6.10.240.10">
    <property type="match status" value="1"/>
</dbReference>
<dbReference type="Gene3D" id="3.40.50.720">
    <property type="entry name" value="NAD(P)-binding Rossmann-like Domain"/>
    <property type="match status" value="1"/>
</dbReference>
<dbReference type="HAMAP" id="MF_00435">
    <property type="entry name" value="IlvC"/>
    <property type="match status" value="1"/>
</dbReference>
<dbReference type="InterPro" id="IPR008927">
    <property type="entry name" value="6-PGluconate_DH-like_C_sf"/>
</dbReference>
<dbReference type="InterPro" id="IPR013023">
    <property type="entry name" value="KARI"/>
</dbReference>
<dbReference type="InterPro" id="IPR000506">
    <property type="entry name" value="KARI_C"/>
</dbReference>
<dbReference type="InterPro" id="IPR013116">
    <property type="entry name" value="KARI_N"/>
</dbReference>
<dbReference type="InterPro" id="IPR014359">
    <property type="entry name" value="KARI_prok"/>
</dbReference>
<dbReference type="InterPro" id="IPR036291">
    <property type="entry name" value="NAD(P)-bd_dom_sf"/>
</dbReference>
<dbReference type="NCBIfam" id="TIGR00465">
    <property type="entry name" value="ilvC"/>
    <property type="match status" value="1"/>
</dbReference>
<dbReference type="NCBIfam" id="NF004017">
    <property type="entry name" value="PRK05479.1"/>
    <property type="match status" value="1"/>
</dbReference>
<dbReference type="NCBIfam" id="NF009940">
    <property type="entry name" value="PRK13403.1"/>
    <property type="match status" value="1"/>
</dbReference>
<dbReference type="PANTHER" id="PTHR21371">
    <property type="entry name" value="KETOL-ACID REDUCTOISOMERASE, MITOCHONDRIAL"/>
    <property type="match status" value="1"/>
</dbReference>
<dbReference type="PANTHER" id="PTHR21371:SF1">
    <property type="entry name" value="KETOL-ACID REDUCTOISOMERASE, MITOCHONDRIAL"/>
    <property type="match status" value="1"/>
</dbReference>
<dbReference type="Pfam" id="PF01450">
    <property type="entry name" value="KARI_C"/>
    <property type="match status" value="1"/>
</dbReference>
<dbReference type="Pfam" id="PF07991">
    <property type="entry name" value="KARI_N"/>
    <property type="match status" value="1"/>
</dbReference>
<dbReference type="PIRSF" id="PIRSF000116">
    <property type="entry name" value="IlvC_gammaproteo"/>
    <property type="match status" value="1"/>
</dbReference>
<dbReference type="SUPFAM" id="SSF48179">
    <property type="entry name" value="6-phosphogluconate dehydrogenase C-terminal domain-like"/>
    <property type="match status" value="1"/>
</dbReference>
<dbReference type="SUPFAM" id="SSF51735">
    <property type="entry name" value="NAD(P)-binding Rossmann-fold domains"/>
    <property type="match status" value="1"/>
</dbReference>
<dbReference type="PROSITE" id="PS51851">
    <property type="entry name" value="KARI_C"/>
    <property type="match status" value="1"/>
</dbReference>
<dbReference type="PROSITE" id="PS51850">
    <property type="entry name" value="KARI_N"/>
    <property type="match status" value="1"/>
</dbReference>
<feature type="chain" id="PRO_1000080636" description="Ketol-acid reductoisomerase (NADP(+))">
    <location>
        <begin position="1"/>
        <end position="330"/>
    </location>
</feature>
<feature type="domain" description="KARI N-terminal Rossmann" evidence="2">
    <location>
        <begin position="2"/>
        <end position="182"/>
    </location>
</feature>
<feature type="domain" description="KARI C-terminal knotted" evidence="3">
    <location>
        <begin position="183"/>
        <end position="328"/>
    </location>
</feature>
<feature type="active site" evidence="1">
    <location>
        <position position="108"/>
    </location>
</feature>
<feature type="binding site" evidence="1">
    <location>
        <begin position="25"/>
        <end position="28"/>
    </location>
    <ligand>
        <name>NADP(+)</name>
        <dbReference type="ChEBI" id="CHEBI:58349"/>
    </ligand>
</feature>
<feature type="binding site" evidence="1">
    <location>
        <position position="48"/>
    </location>
    <ligand>
        <name>NADP(+)</name>
        <dbReference type="ChEBI" id="CHEBI:58349"/>
    </ligand>
</feature>
<feature type="binding site" evidence="1">
    <location>
        <position position="51"/>
    </location>
    <ligand>
        <name>NADP(+)</name>
        <dbReference type="ChEBI" id="CHEBI:58349"/>
    </ligand>
</feature>
<feature type="binding site" evidence="1">
    <location>
        <position position="53"/>
    </location>
    <ligand>
        <name>NADP(+)</name>
        <dbReference type="ChEBI" id="CHEBI:58349"/>
    </ligand>
</feature>
<feature type="binding site" evidence="1">
    <location>
        <begin position="83"/>
        <end position="86"/>
    </location>
    <ligand>
        <name>NADP(+)</name>
        <dbReference type="ChEBI" id="CHEBI:58349"/>
    </ligand>
</feature>
<feature type="binding site" evidence="1">
    <location>
        <position position="134"/>
    </location>
    <ligand>
        <name>NADP(+)</name>
        <dbReference type="ChEBI" id="CHEBI:58349"/>
    </ligand>
</feature>
<feature type="binding site" evidence="1">
    <location>
        <position position="191"/>
    </location>
    <ligand>
        <name>Mg(2+)</name>
        <dbReference type="ChEBI" id="CHEBI:18420"/>
        <label>1</label>
    </ligand>
</feature>
<feature type="binding site" evidence="1">
    <location>
        <position position="191"/>
    </location>
    <ligand>
        <name>Mg(2+)</name>
        <dbReference type="ChEBI" id="CHEBI:18420"/>
        <label>2</label>
    </ligand>
</feature>
<feature type="binding site" evidence="1">
    <location>
        <position position="195"/>
    </location>
    <ligand>
        <name>Mg(2+)</name>
        <dbReference type="ChEBI" id="CHEBI:18420"/>
        <label>1</label>
    </ligand>
</feature>
<feature type="binding site" evidence="1">
    <location>
        <position position="227"/>
    </location>
    <ligand>
        <name>Mg(2+)</name>
        <dbReference type="ChEBI" id="CHEBI:18420"/>
        <label>2</label>
    </ligand>
</feature>
<feature type="binding site" evidence="1">
    <location>
        <position position="231"/>
    </location>
    <ligand>
        <name>Mg(2+)</name>
        <dbReference type="ChEBI" id="CHEBI:18420"/>
        <label>2</label>
    </ligand>
</feature>
<feature type="binding site" evidence="1">
    <location>
        <position position="252"/>
    </location>
    <ligand>
        <name>substrate</name>
    </ligand>
</feature>
<comment type="function">
    <text evidence="1">Involved in the biosynthesis of branched-chain amino acids (BCAA). Catalyzes an alkyl-migration followed by a ketol-acid reduction of (S)-2-acetolactate (S2AL) to yield (R)-2,3-dihydroxy-isovalerate. In the isomerase reaction, S2AL is rearranged via a Mg-dependent methyl migration to produce 3-hydroxy-3-methyl-2-ketobutyrate (HMKB). In the reductase reaction, this 2-ketoacid undergoes a metal-dependent reduction by NADPH to yield (R)-2,3-dihydroxy-isovalerate.</text>
</comment>
<comment type="catalytic activity">
    <reaction evidence="1">
        <text>(2R)-2,3-dihydroxy-3-methylbutanoate + NADP(+) = (2S)-2-acetolactate + NADPH + H(+)</text>
        <dbReference type="Rhea" id="RHEA:22068"/>
        <dbReference type="ChEBI" id="CHEBI:15378"/>
        <dbReference type="ChEBI" id="CHEBI:49072"/>
        <dbReference type="ChEBI" id="CHEBI:57783"/>
        <dbReference type="ChEBI" id="CHEBI:58349"/>
        <dbReference type="ChEBI" id="CHEBI:58476"/>
        <dbReference type="EC" id="1.1.1.86"/>
    </reaction>
</comment>
<comment type="catalytic activity">
    <reaction evidence="1">
        <text>(2R,3R)-2,3-dihydroxy-3-methylpentanoate + NADP(+) = (S)-2-ethyl-2-hydroxy-3-oxobutanoate + NADPH + H(+)</text>
        <dbReference type="Rhea" id="RHEA:13493"/>
        <dbReference type="ChEBI" id="CHEBI:15378"/>
        <dbReference type="ChEBI" id="CHEBI:49256"/>
        <dbReference type="ChEBI" id="CHEBI:49258"/>
        <dbReference type="ChEBI" id="CHEBI:57783"/>
        <dbReference type="ChEBI" id="CHEBI:58349"/>
        <dbReference type="EC" id="1.1.1.86"/>
    </reaction>
</comment>
<comment type="cofactor">
    <cofactor evidence="1">
        <name>Mg(2+)</name>
        <dbReference type="ChEBI" id="CHEBI:18420"/>
    </cofactor>
    <text evidence="1">Binds 2 magnesium ions per subunit.</text>
</comment>
<comment type="pathway">
    <text evidence="1">Amino-acid biosynthesis; L-isoleucine biosynthesis; L-isoleucine from 2-oxobutanoate: step 2/4.</text>
</comment>
<comment type="pathway">
    <text evidence="1">Amino-acid biosynthesis; L-valine biosynthesis; L-valine from pyruvate: step 2/4.</text>
</comment>
<comment type="similarity">
    <text evidence="1">Belongs to the ketol-acid reductoisomerase family.</text>
</comment>
<reference key="1">
    <citation type="submission" date="2007-11" db="EMBL/GenBank/DDBJ databases">
        <title>Complete sequence of Petroga mobilis SJ95.</title>
        <authorList>
            <consortium name="US DOE Joint Genome Institute"/>
            <person name="Copeland A."/>
            <person name="Lucas S."/>
            <person name="Lapidus A."/>
            <person name="Barry K."/>
            <person name="Glavina del Rio T."/>
            <person name="Dalin E."/>
            <person name="Tice H."/>
            <person name="Pitluck S."/>
            <person name="Meincke L."/>
            <person name="Brettin T."/>
            <person name="Bruce D."/>
            <person name="Detter J.C."/>
            <person name="Han C."/>
            <person name="Kuske C.R."/>
            <person name="Schmutz J."/>
            <person name="Larimer F."/>
            <person name="Land M."/>
            <person name="Hauser L."/>
            <person name="Kyrpides N."/>
            <person name="Mikhailova N."/>
            <person name="Noll K."/>
            <person name="Richardson P."/>
        </authorList>
    </citation>
    <scope>NUCLEOTIDE SEQUENCE [LARGE SCALE GENOMIC DNA]</scope>
    <source>
        <strain>DSM 10674 / SJ95</strain>
    </source>
</reference>
<gene>
    <name evidence="1" type="primary">ilvC</name>
    <name type="ordered locus">Pmob_1590</name>
</gene>
<sequence length="330" mass="36445">MVETFYEKDADLGLLKEKTIAVLGYGSQGHAQAQNLKDSGLKVIIGLKKDSKSKETAQRDGFEVYETSEAVKKGDIIQVLIPDEVQSEVYKKDIEPNLDEGNALGFSHGFNIHFGQIVPPKNVDVFMVAPKSPGHLVRRMYLEGKGVPGLLAVHQDFSGKAKELGLSYAKGIGCTRAGVIKTTFKEETETDLFGEQAVLCGGTTSLIKAGFETLVEAGYQPEIAYFECLNELKLIVDLLYEGGLKKMRYSISDTAQYGDITIGPKIIDDRVKETMKDVLANIQNGNFAKDWILENKANRPVFNALTEKDNNSLLEQVGEKLRAMMPWIES</sequence>
<accession>A9BGP6</accession>
<proteinExistence type="inferred from homology"/>
<organism>
    <name type="scientific">Petrotoga mobilis (strain DSM 10674 / SJ95)</name>
    <dbReference type="NCBI Taxonomy" id="403833"/>
    <lineage>
        <taxon>Bacteria</taxon>
        <taxon>Thermotogati</taxon>
        <taxon>Thermotogota</taxon>
        <taxon>Thermotogae</taxon>
        <taxon>Petrotogales</taxon>
        <taxon>Petrotogaceae</taxon>
        <taxon>Petrotoga</taxon>
    </lineage>
</organism>
<protein>
    <recommendedName>
        <fullName evidence="1">Ketol-acid reductoisomerase (NADP(+))</fullName>
        <shortName evidence="1">KARI</shortName>
        <ecNumber evidence="1">1.1.1.86</ecNumber>
    </recommendedName>
    <alternativeName>
        <fullName evidence="1">Acetohydroxy-acid isomeroreductase</fullName>
        <shortName evidence="1">AHIR</shortName>
    </alternativeName>
    <alternativeName>
        <fullName evidence="1">Alpha-keto-beta-hydroxylacyl reductoisomerase</fullName>
    </alternativeName>
    <alternativeName>
        <fullName evidence="1">Ketol-acid reductoisomerase type 1</fullName>
    </alternativeName>
    <alternativeName>
        <fullName evidence="1">Ketol-acid reductoisomerase type I</fullName>
    </alternativeName>
</protein>